<reference key="1">
    <citation type="journal article" date="2000" name="Nature">
        <title>Sequence and analysis of chromosome 1 of the plant Arabidopsis thaliana.</title>
        <authorList>
            <person name="Theologis A."/>
            <person name="Ecker J.R."/>
            <person name="Palm C.J."/>
            <person name="Federspiel N.A."/>
            <person name="Kaul S."/>
            <person name="White O."/>
            <person name="Alonso J."/>
            <person name="Altafi H."/>
            <person name="Araujo R."/>
            <person name="Bowman C.L."/>
            <person name="Brooks S.Y."/>
            <person name="Buehler E."/>
            <person name="Chan A."/>
            <person name="Chao Q."/>
            <person name="Chen H."/>
            <person name="Cheuk R.F."/>
            <person name="Chin C.W."/>
            <person name="Chung M.K."/>
            <person name="Conn L."/>
            <person name="Conway A.B."/>
            <person name="Conway A.R."/>
            <person name="Creasy T.H."/>
            <person name="Dewar K."/>
            <person name="Dunn P."/>
            <person name="Etgu P."/>
            <person name="Feldblyum T.V."/>
            <person name="Feng J.-D."/>
            <person name="Fong B."/>
            <person name="Fujii C.Y."/>
            <person name="Gill J.E."/>
            <person name="Goldsmith A.D."/>
            <person name="Haas B."/>
            <person name="Hansen N.F."/>
            <person name="Hughes B."/>
            <person name="Huizar L."/>
            <person name="Hunter J.L."/>
            <person name="Jenkins J."/>
            <person name="Johnson-Hopson C."/>
            <person name="Khan S."/>
            <person name="Khaykin E."/>
            <person name="Kim C.J."/>
            <person name="Koo H.L."/>
            <person name="Kremenetskaia I."/>
            <person name="Kurtz D.B."/>
            <person name="Kwan A."/>
            <person name="Lam B."/>
            <person name="Langin-Hooper S."/>
            <person name="Lee A."/>
            <person name="Lee J.M."/>
            <person name="Lenz C.A."/>
            <person name="Li J.H."/>
            <person name="Li Y.-P."/>
            <person name="Lin X."/>
            <person name="Liu S.X."/>
            <person name="Liu Z.A."/>
            <person name="Luros J.S."/>
            <person name="Maiti R."/>
            <person name="Marziali A."/>
            <person name="Militscher J."/>
            <person name="Miranda M."/>
            <person name="Nguyen M."/>
            <person name="Nierman W.C."/>
            <person name="Osborne B.I."/>
            <person name="Pai G."/>
            <person name="Peterson J."/>
            <person name="Pham P.K."/>
            <person name="Rizzo M."/>
            <person name="Rooney T."/>
            <person name="Rowley D."/>
            <person name="Sakano H."/>
            <person name="Salzberg S.L."/>
            <person name="Schwartz J.R."/>
            <person name="Shinn P."/>
            <person name="Southwick A.M."/>
            <person name="Sun H."/>
            <person name="Tallon L.J."/>
            <person name="Tambunga G."/>
            <person name="Toriumi M.J."/>
            <person name="Town C.D."/>
            <person name="Utterback T."/>
            <person name="Van Aken S."/>
            <person name="Vaysberg M."/>
            <person name="Vysotskaia V.S."/>
            <person name="Walker M."/>
            <person name="Wu D."/>
            <person name="Yu G."/>
            <person name="Fraser C.M."/>
            <person name="Venter J.C."/>
            <person name="Davis R.W."/>
        </authorList>
    </citation>
    <scope>NUCLEOTIDE SEQUENCE [LARGE SCALE GENOMIC DNA]</scope>
    <source>
        <strain>cv. Columbia</strain>
    </source>
</reference>
<reference key="2">
    <citation type="journal article" date="2017" name="Plant J.">
        <title>Araport11: a complete reannotation of the Arabidopsis thaliana reference genome.</title>
        <authorList>
            <person name="Cheng C.Y."/>
            <person name="Krishnakumar V."/>
            <person name="Chan A.P."/>
            <person name="Thibaud-Nissen F."/>
            <person name="Schobel S."/>
            <person name="Town C.D."/>
        </authorList>
    </citation>
    <scope>GENOME REANNOTATION</scope>
    <source>
        <strain>cv. Columbia</strain>
    </source>
</reference>
<reference key="3">
    <citation type="submission" date="2005-05" db="EMBL/GenBank/DDBJ databases">
        <authorList>
            <person name="Underwood B.A."/>
            <person name="Xiao Y.-L."/>
            <person name="Moskal W.A. Jr."/>
            <person name="Monaghan E.L."/>
            <person name="Wang W."/>
            <person name="Redman J.C."/>
            <person name="Wu H.C."/>
            <person name="Utterback T."/>
            <person name="Town C.D."/>
        </authorList>
    </citation>
    <scope>NUCLEOTIDE SEQUENCE [MRNA]</scope>
    <source>
        <strain>cv. Columbia</strain>
    </source>
</reference>
<reference key="4">
    <citation type="journal article" date="2006" name="Genes Dev.">
        <title>Auxin biosynthesis by the YUCCA flavin monooxygenases controls the formation of floral organs and vascular tissues in Arabidopsis.</title>
        <authorList>
            <person name="Cheng Y."/>
            <person name="Dai X."/>
            <person name="Zhao Y."/>
        </authorList>
    </citation>
    <scope>GENE FAMILY</scope>
    <scope>NOMENCLATURE</scope>
</reference>
<reference key="5">
    <citation type="journal article" date="2007" name="Plant Cell">
        <title>Auxin synthesized by the YUCCA flavin monooxygenases is essential for embryogenesis and leaf formation in Arabidopsis.</title>
        <authorList>
            <person name="Cheng Y."/>
            <person name="Dai X."/>
            <person name="Zhao Y."/>
        </authorList>
    </citation>
    <scope>FUNCTION</scope>
    <scope>DEVELOPMENTAL STAGE</scope>
</reference>
<reference key="6">
    <citation type="journal article" date="2007" name="Plant J.">
        <title>Identification of a flavin-monooxygenase as the S-oxygenating enzyme in aliphatic glucosinolate biosynthesis in Arabidopsis.</title>
        <authorList>
            <person name="Hansen B.G."/>
            <person name="Kliebenstein D.J."/>
            <person name="Halkier B.A."/>
        </authorList>
    </citation>
    <scope>GENE FAMILY</scope>
    <source>
        <strain>cv. Columbia</strain>
    </source>
</reference>
<reference key="7">
    <citation type="journal article" date="2012" name="Planta">
        <title>Activation of a flavin monooxygenase gene YUCCA7 enhances drought resistance in Arabidopsis.</title>
        <authorList>
            <person name="Lee M."/>
            <person name="Jung J.H."/>
            <person name="Han D.Y."/>
            <person name="Seo P.J."/>
            <person name="Park W.J."/>
            <person name="Park C.M."/>
        </authorList>
    </citation>
    <scope>INDUCTION</scope>
</reference>
<name>YUC10_ARATH</name>
<keyword id="KW-0073">Auxin biosynthesis</keyword>
<keyword id="KW-0274">FAD</keyword>
<keyword id="KW-0285">Flavoprotein</keyword>
<keyword id="KW-0503">Monooxygenase</keyword>
<keyword id="KW-0521">NADP</keyword>
<keyword id="KW-0560">Oxidoreductase</keyword>
<keyword id="KW-1185">Reference proteome</keyword>
<dbReference type="EC" id="1.14.13.168"/>
<dbReference type="EMBL" id="AC084414">
    <property type="protein sequence ID" value="AAG29745.1"/>
    <property type="molecule type" value="Genomic_DNA"/>
</dbReference>
<dbReference type="EMBL" id="CP002684">
    <property type="protein sequence ID" value="AEE32365.1"/>
    <property type="molecule type" value="Genomic_DNA"/>
</dbReference>
<dbReference type="EMBL" id="DQ056487">
    <property type="protein sequence ID" value="AAY78644.1"/>
    <property type="molecule type" value="mRNA"/>
</dbReference>
<dbReference type="PIR" id="H96526">
    <property type="entry name" value="H96526"/>
</dbReference>
<dbReference type="RefSeq" id="NP_175321.1">
    <property type="nucleotide sequence ID" value="NM_103784.2"/>
</dbReference>
<dbReference type="SMR" id="Q9FVQ0"/>
<dbReference type="STRING" id="3702.Q9FVQ0"/>
<dbReference type="PaxDb" id="3702-AT1G48910.1"/>
<dbReference type="ProteomicsDB" id="232327"/>
<dbReference type="EnsemblPlants" id="AT1G48910.1">
    <property type="protein sequence ID" value="AT1G48910.1"/>
    <property type="gene ID" value="AT1G48910"/>
</dbReference>
<dbReference type="GeneID" id="841313"/>
<dbReference type="Gramene" id="AT1G48910.1">
    <property type="protein sequence ID" value="AT1G48910.1"/>
    <property type="gene ID" value="AT1G48910"/>
</dbReference>
<dbReference type="KEGG" id="ath:AT1G48910"/>
<dbReference type="Araport" id="AT1G48910"/>
<dbReference type="TAIR" id="AT1G48910">
    <property type="gene designation" value="YUC10"/>
</dbReference>
<dbReference type="eggNOG" id="KOG1399">
    <property type="taxonomic scope" value="Eukaryota"/>
</dbReference>
<dbReference type="HOGENOM" id="CLU_006909_2_1_1"/>
<dbReference type="InParanoid" id="Q9FVQ0"/>
<dbReference type="OMA" id="DESNNKW"/>
<dbReference type="PhylomeDB" id="Q9FVQ0"/>
<dbReference type="UniPathway" id="UPA00151"/>
<dbReference type="PRO" id="PR:Q9FVQ0"/>
<dbReference type="Proteomes" id="UP000006548">
    <property type="component" value="Chromosome 1"/>
</dbReference>
<dbReference type="ExpressionAtlas" id="Q9FVQ0">
    <property type="expression patterns" value="baseline and differential"/>
</dbReference>
<dbReference type="GO" id="GO:0050660">
    <property type="term" value="F:flavin adenine dinucleotide binding"/>
    <property type="evidence" value="ECO:0007669"/>
    <property type="project" value="InterPro"/>
</dbReference>
<dbReference type="GO" id="GO:0103075">
    <property type="term" value="F:indole-3-pyruvate monooxygenase activity"/>
    <property type="evidence" value="ECO:0007669"/>
    <property type="project" value="UniProtKB-EC"/>
</dbReference>
<dbReference type="GO" id="GO:0050661">
    <property type="term" value="F:NADP binding"/>
    <property type="evidence" value="ECO:0007669"/>
    <property type="project" value="InterPro"/>
</dbReference>
<dbReference type="GO" id="GO:0009851">
    <property type="term" value="P:auxin biosynthetic process"/>
    <property type="evidence" value="ECO:0007669"/>
    <property type="project" value="UniProtKB-UniPathway"/>
</dbReference>
<dbReference type="GO" id="GO:0009723">
    <property type="term" value="P:response to ethylene"/>
    <property type="evidence" value="ECO:0000270"/>
    <property type="project" value="TAIR"/>
</dbReference>
<dbReference type="Gene3D" id="3.50.50.60">
    <property type="entry name" value="FAD/NAD(P)-binding domain"/>
    <property type="match status" value="1"/>
</dbReference>
<dbReference type="InterPro" id="IPR050982">
    <property type="entry name" value="Auxin_biosynth/cation_transpt"/>
</dbReference>
<dbReference type="InterPro" id="IPR036188">
    <property type="entry name" value="FAD/NAD-bd_sf"/>
</dbReference>
<dbReference type="InterPro" id="IPR000960">
    <property type="entry name" value="Flavin_mOase"/>
</dbReference>
<dbReference type="PANTHER" id="PTHR43539">
    <property type="entry name" value="FLAVIN-BINDING MONOOXYGENASE-LIKE PROTEIN (AFU_ORTHOLOGUE AFUA_4G09220)"/>
    <property type="match status" value="1"/>
</dbReference>
<dbReference type="PANTHER" id="PTHR43539:SF93">
    <property type="entry name" value="INDOLE-3-PYRUVATE MONOOXYGENASE YUCCA10-RELATED"/>
    <property type="match status" value="1"/>
</dbReference>
<dbReference type="Pfam" id="PF13738">
    <property type="entry name" value="Pyr_redox_3"/>
    <property type="match status" value="1"/>
</dbReference>
<dbReference type="PIRSF" id="PIRSF000332">
    <property type="entry name" value="FMO"/>
    <property type="match status" value="1"/>
</dbReference>
<dbReference type="PRINTS" id="PR00368">
    <property type="entry name" value="FADPNR"/>
</dbReference>
<dbReference type="PRINTS" id="PR00469">
    <property type="entry name" value="PNDRDTASEII"/>
</dbReference>
<dbReference type="SUPFAM" id="SSF51905">
    <property type="entry name" value="FAD/NAD(P)-binding domain"/>
    <property type="match status" value="1"/>
</dbReference>
<comment type="function">
    <text evidence="3">Involved in auxin biosynthesis.</text>
</comment>
<comment type="catalytic activity">
    <reaction>
        <text>indole-3-pyruvate + NADPH + O2 + H(+) = (indol-3-yl)acetate + CO2 + NADP(+) + H2O</text>
        <dbReference type="Rhea" id="RHEA:34331"/>
        <dbReference type="ChEBI" id="CHEBI:15377"/>
        <dbReference type="ChEBI" id="CHEBI:15378"/>
        <dbReference type="ChEBI" id="CHEBI:15379"/>
        <dbReference type="ChEBI" id="CHEBI:16526"/>
        <dbReference type="ChEBI" id="CHEBI:17640"/>
        <dbReference type="ChEBI" id="CHEBI:30854"/>
        <dbReference type="ChEBI" id="CHEBI:57783"/>
        <dbReference type="ChEBI" id="CHEBI:58349"/>
        <dbReference type="EC" id="1.14.13.168"/>
    </reaction>
</comment>
<comment type="cofactor">
    <cofactor evidence="1">
        <name>FAD</name>
        <dbReference type="ChEBI" id="CHEBI:57692"/>
    </cofactor>
</comment>
<comment type="pathway">
    <text>Plant hormone metabolism; auxin biosynthesis.</text>
</comment>
<comment type="developmental stage">
    <text evidence="3">Expression relatively broad during early stages of embryogenesis and more restricted to discrete groups of cells in mature embryos. Later, expression mainly restricted to the cotyledons and the apical meristem.</text>
</comment>
<comment type="induction">
    <text evidence="4">Up-regulated by drought.</text>
</comment>
<comment type="similarity">
    <text evidence="5">Belongs to the FMO family.</text>
</comment>
<accession>Q9FVQ0</accession>
<evidence type="ECO:0000250" key="1"/>
<evidence type="ECO:0000255" key="2"/>
<evidence type="ECO:0000269" key="3">
    <source>
    </source>
</evidence>
<evidence type="ECO:0000269" key="4">
    <source>
    </source>
</evidence>
<evidence type="ECO:0000305" key="5"/>
<protein>
    <recommendedName>
        <fullName>Probable indole-3-pyruvate monooxygenase YUCCA10</fullName>
        <ecNumber>1.14.13.168</ecNumber>
    </recommendedName>
    <alternativeName>
        <fullName>Flavin-containing monooxygenase YUCCA10</fullName>
    </alternativeName>
</protein>
<organism>
    <name type="scientific">Arabidopsis thaliana</name>
    <name type="common">Mouse-ear cress</name>
    <dbReference type="NCBI Taxonomy" id="3702"/>
    <lineage>
        <taxon>Eukaryota</taxon>
        <taxon>Viridiplantae</taxon>
        <taxon>Streptophyta</taxon>
        <taxon>Embryophyta</taxon>
        <taxon>Tracheophyta</taxon>
        <taxon>Spermatophyta</taxon>
        <taxon>Magnoliopsida</taxon>
        <taxon>eudicotyledons</taxon>
        <taxon>Gunneridae</taxon>
        <taxon>Pentapetalae</taxon>
        <taxon>rosids</taxon>
        <taxon>malvids</taxon>
        <taxon>Brassicales</taxon>
        <taxon>Brassicaceae</taxon>
        <taxon>Camelineae</taxon>
        <taxon>Arabidopsis</taxon>
    </lineage>
</organism>
<gene>
    <name type="primary">YUC10</name>
    <name type="synonym">YUCCA10</name>
    <name type="ordered locus">At1g48910</name>
    <name type="ORF">F27K7.7</name>
</gene>
<sequence>METVVVIVGAGPAGLATSVCLNQHSIPNVILEKEDIYASLWKKRAYDRLKLHLAKEFCQLPFMPHGREVPTFMSKELFVNYLDAYVARFDINPRYNRTVKSSTFDESNNKWRVVAENTVTGETEVYWSEFLVVATGENGDGNIPMVEGIDTFGGEIMHSSEYKSGRDFKDKNVLVVGGGNSGMEISFDLCNFGANTTILIRTPRHVVTKEVIHLGMTLLKYAPVAMVDTLVTTMAKILYGDLSKYGLFRPKQGPFATKLFTGKAPVIDVGTVEKIRDGEIQVINGGIGSINGKTLTFENGHKQDFDAIVFATGYKSSVCNWLEDYEYVMKKDGFPKAPMPKHWKGEKNLYCAGFSRKGIAGGAEDAMSVADDIRSILATLKNN</sequence>
<proteinExistence type="evidence at transcript level"/>
<feature type="chain" id="PRO_0000400077" description="Probable indole-3-pyruvate monooxygenase YUCCA10">
    <location>
        <begin position="1"/>
        <end position="383"/>
    </location>
</feature>
<feature type="binding site" evidence="2">
    <location>
        <begin position="9"/>
        <end position="14"/>
    </location>
    <ligand>
        <name>FAD</name>
        <dbReference type="ChEBI" id="CHEBI:57692"/>
    </ligand>
</feature>
<feature type="binding site" evidence="2">
    <location>
        <begin position="177"/>
        <end position="182"/>
    </location>
    <ligand>
        <name>NADP(+)</name>
        <dbReference type="ChEBI" id="CHEBI:58349"/>
    </ligand>
</feature>